<proteinExistence type="inferred from homology"/>
<reference key="1">
    <citation type="journal article" date="2007" name="Proc. Natl. Acad. Sci. U.S.A.">
        <title>Genome sequencing reveals complex secondary metabolome in the marine actinomycete Salinispora tropica.</title>
        <authorList>
            <person name="Udwary D.W."/>
            <person name="Zeigler L."/>
            <person name="Asolkar R.N."/>
            <person name="Singan V."/>
            <person name="Lapidus A."/>
            <person name="Fenical W."/>
            <person name="Jensen P.R."/>
            <person name="Moore B.S."/>
        </authorList>
    </citation>
    <scope>NUCLEOTIDE SEQUENCE [LARGE SCALE GENOMIC DNA]</scope>
    <source>
        <strain>ATCC BAA-916 / DSM 44818 / JCM 13857 / NBRC 105044 / CNB-440</strain>
    </source>
</reference>
<sequence length="255" mass="26292">MSLAVRVIPCLDVDAGRVVKGVNFLDLRDAGDPVERAAAYDRAGADELTFLDVTASVSDRGTMLDVVRRTAESVFIPLTVGGGVRQVSDVDALLRAGADKVGVNTAAIARPELIAEIADRFGRQVLVLSLDVRRASSGTTASGFEVTTHGGRRGAGIDAIDWARRGAELGAGEILLNSMSADGTKTGFDLELIRAVRAVVNVPVVASGGAGAAGHFPPAIDAGADAVLAASVFHFGELTVGEVKDALRGKGHPVR</sequence>
<dbReference type="EC" id="4.3.2.10" evidence="1"/>
<dbReference type="EMBL" id="CP000667">
    <property type="protein sequence ID" value="ABP55621.1"/>
    <property type="molecule type" value="Genomic_DNA"/>
</dbReference>
<dbReference type="RefSeq" id="WP_012014398.1">
    <property type="nucleotide sequence ID" value="NC_009380.1"/>
</dbReference>
<dbReference type="SMR" id="A4X9P7"/>
<dbReference type="STRING" id="369723.Strop_3187"/>
<dbReference type="KEGG" id="stp:Strop_3187"/>
<dbReference type="PATRIC" id="fig|369723.5.peg.3279"/>
<dbReference type="eggNOG" id="COG0107">
    <property type="taxonomic scope" value="Bacteria"/>
</dbReference>
<dbReference type="HOGENOM" id="CLU_048577_4_0_11"/>
<dbReference type="UniPathway" id="UPA00031">
    <property type="reaction ID" value="UER00010"/>
</dbReference>
<dbReference type="Proteomes" id="UP000000235">
    <property type="component" value="Chromosome"/>
</dbReference>
<dbReference type="GO" id="GO:0005737">
    <property type="term" value="C:cytoplasm"/>
    <property type="evidence" value="ECO:0007669"/>
    <property type="project" value="UniProtKB-SubCell"/>
</dbReference>
<dbReference type="GO" id="GO:0000107">
    <property type="term" value="F:imidazoleglycerol-phosphate synthase activity"/>
    <property type="evidence" value="ECO:0007669"/>
    <property type="project" value="UniProtKB-UniRule"/>
</dbReference>
<dbReference type="GO" id="GO:0016829">
    <property type="term" value="F:lyase activity"/>
    <property type="evidence" value="ECO:0007669"/>
    <property type="project" value="UniProtKB-KW"/>
</dbReference>
<dbReference type="GO" id="GO:0000105">
    <property type="term" value="P:L-histidine biosynthetic process"/>
    <property type="evidence" value="ECO:0007669"/>
    <property type="project" value="UniProtKB-UniRule"/>
</dbReference>
<dbReference type="CDD" id="cd04731">
    <property type="entry name" value="HisF"/>
    <property type="match status" value="1"/>
</dbReference>
<dbReference type="FunFam" id="3.20.20.70:FF:000006">
    <property type="entry name" value="Imidazole glycerol phosphate synthase subunit HisF"/>
    <property type="match status" value="1"/>
</dbReference>
<dbReference type="Gene3D" id="3.20.20.70">
    <property type="entry name" value="Aldolase class I"/>
    <property type="match status" value="1"/>
</dbReference>
<dbReference type="HAMAP" id="MF_01013">
    <property type="entry name" value="HisF"/>
    <property type="match status" value="1"/>
</dbReference>
<dbReference type="InterPro" id="IPR013785">
    <property type="entry name" value="Aldolase_TIM"/>
</dbReference>
<dbReference type="InterPro" id="IPR006062">
    <property type="entry name" value="His_biosynth"/>
</dbReference>
<dbReference type="InterPro" id="IPR004651">
    <property type="entry name" value="HisF"/>
</dbReference>
<dbReference type="InterPro" id="IPR050064">
    <property type="entry name" value="IGPS_HisA/HisF"/>
</dbReference>
<dbReference type="InterPro" id="IPR011060">
    <property type="entry name" value="RibuloseP-bd_barrel"/>
</dbReference>
<dbReference type="NCBIfam" id="TIGR00735">
    <property type="entry name" value="hisF"/>
    <property type="match status" value="1"/>
</dbReference>
<dbReference type="PANTHER" id="PTHR21235:SF2">
    <property type="entry name" value="IMIDAZOLE GLYCEROL PHOSPHATE SYNTHASE HISHF"/>
    <property type="match status" value="1"/>
</dbReference>
<dbReference type="PANTHER" id="PTHR21235">
    <property type="entry name" value="IMIDAZOLE GLYCEROL PHOSPHATE SYNTHASE SUBUNIT HISF/H IGP SYNTHASE SUBUNIT HISF/H"/>
    <property type="match status" value="1"/>
</dbReference>
<dbReference type="Pfam" id="PF00977">
    <property type="entry name" value="His_biosynth"/>
    <property type="match status" value="1"/>
</dbReference>
<dbReference type="SUPFAM" id="SSF51366">
    <property type="entry name" value="Ribulose-phoshate binding barrel"/>
    <property type="match status" value="1"/>
</dbReference>
<keyword id="KW-0028">Amino-acid biosynthesis</keyword>
<keyword id="KW-0963">Cytoplasm</keyword>
<keyword id="KW-0368">Histidine biosynthesis</keyword>
<keyword id="KW-0456">Lyase</keyword>
<keyword id="KW-1185">Reference proteome</keyword>
<evidence type="ECO:0000255" key="1">
    <source>
        <dbReference type="HAMAP-Rule" id="MF_01013"/>
    </source>
</evidence>
<accession>A4X9P7</accession>
<name>HIS6_SALTO</name>
<feature type="chain" id="PRO_1000084077" description="Imidazole glycerol phosphate synthase subunit HisF">
    <location>
        <begin position="1"/>
        <end position="255"/>
    </location>
</feature>
<feature type="active site" evidence="1">
    <location>
        <position position="12"/>
    </location>
</feature>
<feature type="active site" evidence="1">
    <location>
        <position position="131"/>
    </location>
</feature>
<comment type="function">
    <text evidence="1">IGPS catalyzes the conversion of PRFAR and glutamine to IGP, AICAR and glutamate. The HisF subunit catalyzes the cyclization activity that produces IGP and AICAR from PRFAR using the ammonia provided by the HisH subunit.</text>
</comment>
<comment type="catalytic activity">
    <reaction evidence="1">
        <text>5-[(5-phospho-1-deoxy-D-ribulos-1-ylimino)methylamino]-1-(5-phospho-beta-D-ribosyl)imidazole-4-carboxamide + L-glutamine = D-erythro-1-(imidazol-4-yl)glycerol 3-phosphate + 5-amino-1-(5-phospho-beta-D-ribosyl)imidazole-4-carboxamide + L-glutamate + H(+)</text>
        <dbReference type="Rhea" id="RHEA:24793"/>
        <dbReference type="ChEBI" id="CHEBI:15378"/>
        <dbReference type="ChEBI" id="CHEBI:29985"/>
        <dbReference type="ChEBI" id="CHEBI:58278"/>
        <dbReference type="ChEBI" id="CHEBI:58359"/>
        <dbReference type="ChEBI" id="CHEBI:58475"/>
        <dbReference type="ChEBI" id="CHEBI:58525"/>
        <dbReference type="EC" id="4.3.2.10"/>
    </reaction>
</comment>
<comment type="pathway">
    <text evidence="1">Amino-acid biosynthesis; L-histidine biosynthesis; L-histidine from 5-phospho-alpha-D-ribose 1-diphosphate: step 5/9.</text>
</comment>
<comment type="subunit">
    <text evidence="1">Heterodimer of HisH and HisF.</text>
</comment>
<comment type="subcellular location">
    <subcellularLocation>
        <location evidence="1">Cytoplasm</location>
    </subcellularLocation>
</comment>
<comment type="similarity">
    <text evidence="1">Belongs to the HisA/HisF family.</text>
</comment>
<gene>
    <name evidence="1" type="primary">hisF</name>
    <name type="ordered locus">Strop_3187</name>
</gene>
<organism>
    <name type="scientific">Salinispora tropica (strain ATCC BAA-916 / DSM 44818 / JCM 13857 / NBRC 105044 / CNB-440)</name>
    <dbReference type="NCBI Taxonomy" id="369723"/>
    <lineage>
        <taxon>Bacteria</taxon>
        <taxon>Bacillati</taxon>
        <taxon>Actinomycetota</taxon>
        <taxon>Actinomycetes</taxon>
        <taxon>Micromonosporales</taxon>
        <taxon>Micromonosporaceae</taxon>
        <taxon>Salinispora</taxon>
    </lineage>
</organism>
<protein>
    <recommendedName>
        <fullName evidence="1">Imidazole glycerol phosphate synthase subunit HisF</fullName>
        <ecNumber evidence="1">4.3.2.10</ecNumber>
    </recommendedName>
    <alternativeName>
        <fullName evidence="1">IGP synthase cyclase subunit</fullName>
    </alternativeName>
    <alternativeName>
        <fullName evidence="1">IGP synthase subunit HisF</fullName>
    </alternativeName>
    <alternativeName>
        <fullName evidence="1">ImGP synthase subunit HisF</fullName>
        <shortName evidence="1">IGPS subunit HisF</shortName>
    </alternativeName>
</protein>